<comment type="function">
    <text evidence="1">Catalyzes the reversible phosphorylation of UMP to UDP.</text>
</comment>
<comment type="catalytic activity">
    <reaction evidence="1">
        <text>UMP + ATP = UDP + ADP</text>
        <dbReference type="Rhea" id="RHEA:24400"/>
        <dbReference type="ChEBI" id="CHEBI:30616"/>
        <dbReference type="ChEBI" id="CHEBI:57865"/>
        <dbReference type="ChEBI" id="CHEBI:58223"/>
        <dbReference type="ChEBI" id="CHEBI:456216"/>
        <dbReference type="EC" id="2.7.4.22"/>
    </reaction>
</comment>
<comment type="activity regulation">
    <text evidence="1">Allosterically activated by GTP. Inhibited by UTP.</text>
</comment>
<comment type="pathway">
    <text evidence="1">Pyrimidine metabolism; CTP biosynthesis via de novo pathway; UDP from UMP (UMPK route): step 1/1.</text>
</comment>
<comment type="subunit">
    <text evidence="1">Homohexamer.</text>
</comment>
<comment type="subcellular location">
    <subcellularLocation>
        <location evidence="1">Cytoplasm</location>
    </subcellularLocation>
</comment>
<comment type="similarity">
    <text evidence="1">Belongs to the UMP kinase family.</text>
</comment>
<gene>
    <name evidence="1" type="primary">pyrH</name>
    <name type="ordered locus">YPTB3001</name>
</gene>
<dbReference type="EC" id="2.7.4.22" evidence="1"/>
<dbReference type="EMBL" id="BX936398">
    <property type="protein sequence ID" value="CAH22239.1"/>
    <property type="molecule type" value="Genomic_DNA"/>
</dbReference>
<dbReference type="RefSeq" id="WP_002212133.1">
    <property type="nucleotide sequence ID" value="NZ_CP009712.1"/>
</dbReference>
<dbReference type="SMR" id="Q667J1"/>
<dbReference type="GeneID" id="96662368"/>
<dbReference type="KEGG" id="ypo:BZ17_3620"/>
<dbReference type="KEGG" id="yps:YPTB3001"/>
<dbReference type="PATRIC" id="fig|273123.14.peg.3800"/>
<dbReference type="UniPathway" id="UPA00159">
    <property type="reaction ID" value="UER00275"/>
</dbReference>
<dbReference type="Proteomes" id="UP000001011">
    <property type="component" value="Chromosome"/>
</dbReference>
<dbReference type="GO" id="GO:0005829">
    <property type="term" value="C:cytosol"/>
    <property type="evidence" value="ECO:0007669"/>
    <property type="project" value="TreeGrafter"/>
</dbReference>
<dbReference type="GO" id="GO:0005524">
    <property type="term" value="F:ATP binding"/>
    <property type="evidence" value="ECO:0007669"/>
    <property type="project" value="UniProtKB-KW"/>
</dbReference>
<dbReference type="GO" id="GO:0033862">
    <property type="term" value="F:UMP kinase activity"/>
    <property type="evidence" value="ECO:0007669"/>
    <property type="project" value="UniProtKB-EC"/>
</dbReference>
<dbReference type="GO" id="GO:0044210">
    <property type="term" value="P:'de novo' CTP biosynthetic process"/>
    <property type="evidence" value="ECO:0007669"/>
    <property type="project" value="UniProtKB-UniRule"/>
</dbReference>
<dbReference type="GO" id="GO:0006225">
    <property type="term" value="P:UDP biosynthetic process"/>
    <property type="evidence" value="ECO:0007669"/>
    <property type="project" value="TreeGrafter"/>
</dbReference>
<dbReference type="CDD" id="cd04254">
    <property type="entry name" value="AAK_UMPK-PyrH-Ec"/>
    <property type="match status" value="1"/>
</dbReference>
<dbReference type="FunFam" id="3.40.1160.10:FF:000001">
    <property type="entry name" value="Uridylate kinase"/>
    <property type="match status" value="1"/>
</dbReference>
<dbReference type="Gene3D" id="3.40.1160.10">
    <property type="entry name" value="Acetylglutamate kinase-like"/>
    <property type="match status" value="1"/>
</dbReference>
<dbReference type="HAMAP" id="MF_01220_B">
    <property type="entry name" value="PyrH_B"/>
    <property type="match status" value="1"/>
</dbReference>
<dbReference type="InterPro" id="IPR036393">
    <property type="entry name" value="AceGlu_kinase-like_sf"/>
</dbReference>
<dbReference type="InterPro" id="IPR001048">
    <property type="entry name" value="Asp/Glu/Uridylate_kinase"/>
</dbReference>
<dbReference type="InterPro" id="IPR011817">
    <property type="entry name" value="Uridylate_kinase"/>
</dbReference>
<dbReference type="InterPro" id="IPR015963">
    <property type="entry name" value="Uridylate_kinase_bac"/>
</dbReference>
<dbReference type="NCBIfam" id="TIGR02075">
    <property type="entry name" value="pyrH_bact"/>
    <property type="match status" value="1"/>
</dbReference>
<dbReference type="PANTHER" id="PTHR42833">
    <property type="entry name" value="URIDYLATE KINASE"/>
    <property type="match status" value="1"/>
</dbReference>
<dbReference type="PANTHER" id="PTHR42833:SF4">
    <property type="entry name" value="URIDYLATE KINASE PUMPKIN, CHLOROPLASTIC"/>
    <property type="match status" value="1"/>
</dbReference>
<dbReference type="Pfam" id="PF00696">
    <property type="entry name" value="AA_kinase"/>
    <property type="match status" value="1"/>
</dbReference>
<dbReference type="PIRSF" id="PIRSF005650">
    <property type="entry name" value="Uridylate_kin"/>
    <property type="match status" value="1"/>
</dbReference>
<dbReference type="SUPFAM" id="SSF53633">
    <property type="entry name" value="Carbamate kinase-like"/>
    <property type="match status" value="1"/>
</dbReference>
<evidence type="ECO:0000255" key="1">
    <source>
        <dbReference type="HAMAP-Rule" id="MF_01220"/>
    </source>
</evidence>
<accession>Q667J1</accession>
<sequence length="241" mass="25973">MATNAKPVYQRILLKLSGEALQGAEGFGIDASVLDRMAQEVKELVELGIQVGVVIGGGNLFRGAGLAQAGMNRVVGDHMGMLATVMNGLAMRDALHRAYVNARLMSAIPLNGVCDNYSWAEAISLLRHNRVVIFAAGTGNPFFTTDSAACLRGIEIEADVVLKATKVDGVYSADPVKNPDATLYEQLTYQDVLEQELKVMDLAAFTLARDHNLPIRVFNMNKPGALRRVVMGENEGTLIAK</sequence>
<name>PYRH_YERPS</name>
<proteinExistence type="inferred from homology"/>
<feature type="chain" id="PRO_1000054059" description="Uridylate kinase">
    <location>
        <begin position="1"/>
        <end position="241"/>
    </location>
</feature>
<feature type="region of interest" description="Involved in allosteric activation by GTP" evidence="1">
    <location>
        <begin position="23"/>
        <end position="28"/>
    </location>
</feature>
<feature type="binding site" evidence="1">
    <location>
        <begin position="15"/>
        <end position="18"/>
    </location>
    <ligand>
        <name>ATP</name>
        <dbReference type="ChEBI" id="CHEBI:30616"/>
    </ligand>
</feature>
<feature type="binding site" evidence="1">
    <location>
        <position position="57"/>
    </location>
    <ligand>
        <name>UMP</name>
        <dbReference type="ChEBI" id="CHEBI:57865"/>
    </ligand>
</feature>
<feature type="binding site" evidence="1">
    <location>
        <position position="58"/>
    </location>
    <ligand>
        <name>ATP</name>
        <dbReference type="ChEBI" id="CHEBI:30616"/>
    </ligand>
</feature>
<feature type="binding site" evidence="1">
    <location>
        <position position="62"/>
    </location>
    <ligand>
        <name>ATP</name>
        <dbReference type="ChEBI" id="CHEBI:30616"/>
    </ligand>
</feature>
<feature type="binding site" evidence="1">
    <location>
        <position position="77"/>
    </location>
    <ligand>
        <name>UMP</name>
        <dbReference type="ChEBI" id="CHEBI:57865"/>
    </ligand>
</feature>
<feature type="binding site" evidence="1">
    <location>
        <begin position="138"/>
        <end position="145"/>
    </location>
    <ligand>
        <name>UMP</name>
        <dbReference type="ChEBI" id="CHEBI:57865"/>
    </ligand>
</feature>
<feature type="binding site" evidence="1">
    <location>
        <position position="165"/>
    </location>
    <ligand>
        <name>ATP</name>
        <dbReference type="ChEBI" id="CHEBI:30616"/>
    </ligand>
</feature>
<feature type="binding site" evidence="1">
    <location>
        <position position="171"/>
    </location>
    <ligand>
        <name>ATP</name>
        <dbReference type="ChEBI" id="CHEBI:30616"/>
    </ligand>
</feature>
<feature type="binding site" evidence="1">
    <location>
        <position position="174"/>
    </location>
    <ligand>
        <name>ATP</name>
        <dbReference type="ChEBI" id="CHEBI:30616"/>
    </ligand>
</feature>
<organism>
    <name type="scientific">Yersinia pseudotuberculosis serotype I (strain IP32953)</name>
    <dbReference type="NCBI Taxonomy" id="273123"/>
    <lineage>
        <taxon>Bacteria</taxon>
        <taxon>Pseudomonadati</taxon>
        <taxon>Pseudomonadota</taxon>
        <taxon>Gammaproteobacteria</taxon>
        <taxon>Enterobacterales</taxon>
        <taxon>Yersiniaceae</taxon>
        <taxon>Yersinia</taxon>
    </lineage>
</organism>
<protein>
    <recommendedName>
        <fullName evidence="1">Uridylate kinase</fullName>
        <shortName evidence="1">UK</shortName>
        <ecNumber evidence="1">2.7.4.22</ecNumber>
    </recommendedName>
    <alternativeName>
        <fullName evidence="1">Uridine monophosphate kinase</fullName>
        <shortName evidence="1">UMP kinase</shortName>
        <shortName evidence="1">UMPK</shortName>
    </alternativeName>
</protein>
<reference key="1">
    <citation type="journal article" date="2004" name="Proc. Natl. Acad. Sci. U.S.A.">
        <title>Insights into the evolution of Yersinia pestis through whole-genome comparison with Yersinia pseudotuberculosis.</title>
        <authorList>
            <person name="Chain P.S.G."/>
            <person name="Carniel E."/>
            <person name="Larimer F.W."/>
            <person name="Lamerdin J."/>
            <person name="Stoutland P.O."/>
            <person name="Regala W.M."/>
            <person name="Georgescu A.M."/>
            <person name="Vergez L.M."/>
            <person name="Land M.L."/>
            <person name="Motin V.L."/>
            <person name="Brubaker R.R."/>
            <person name="Fowler J."/>
            <person name="Hinnebusch J."/>
            <person name="Marceau M."/>
            <person name="Medigue C."/>
            <person name="Simonet M."/>
            <person name="Chenal-Francisque V."/>
            <person name="Souza B."/>
            <person name="Dacheux D."/>
            <person name="Elliott J.M."/>
            <person name="Derbise A."/>
            <person name="Hauser L.J."/>
            <person name="Garcia E."/>
        </authorList>
    </citation>
    <scope>NUCLEOTIDE SEQUENCE [LARGE SCALE GENOMIC DNA]</scope>
    <source>
        <strain>IP32953</strain>
    </source>
</reference>
<keyword id="KW-0021">Allosteric enzyme</keyword>
<keyword id="KW-0067">ATP-binding</keyword>
<keyword id="KW-0963">Cytoplasm</keyword>
<keyword id="KW-0418">Kinase</keyword>
<keyword id="KW-0547">Nucleotide-binding</keyword>
<keyword id="KW-0665">Pyrimidine biosynthesis</keyword>
<keyword id="KW-0808">Transferase</keyword>